<name>NMI_MOUSE</name>
<organism>
    <name type="scientific">Mus musculus</name>
    <name type="common">Mouse</name>
    <dbReference type="NCBI Taxonomy" id="10090"/>
    <lineage>
        <taxon>Eukaryota</taxon>
        <taxon>Metazoa</taxon>
        <taxon>Chordata</taxon>
        <taxon>Craniata</taxon>
        <taxon>Vertebrata</taxon>
        <taxon>Euteleostomi</taxon>
        <taxon>Mammalia</taxon>
        <taxon>Eutheria</taxon>
        <taxon>Euarchontoglires</taxon>
        <taxon>Glires</taxon>
        <taxon>Rodentia</taxon>
        <taxon>Myomorpha</taxon>
        <taxon>Muroidea</taxon>
        <taxon>Muridae</taxon>
        <taxon>Murinae</taxon>
        <taxon>Mus</taxon>
        <taxon>Mus</taxon>
    </lineage>
</organism>
<protein>
    <recommendedName>
        <fullName evidence="1">N-myc-interactor</fullName>
        <shortName evidence="6">Nmi</shortName>
    </recommendedName>
    <alternativeName>
        <fullName evidence="6">N-myc and STAT interactor</fullName>
    </alternativeName>
</protein>
<accession>O35309</accession>
<accession>Q99M49</accession>
<dbReference type="EMBL" id="AF019249">
    <property type="protein sequence ID" value="AAB70819.1"/>
    <property type="molecule type" value="mRNA"/>
</dbReference>
<dbReference type="EMBL" id="BC002019">
    <property type="protein sequence ID" value="AAH02019.1"/>
    <property type="molecule type" value="mRNA"/>
</dbReference>
<dbReference type="CCDS" id="CCDS16031.1"/>
<dbReference type="RefSeq" id="NP_001135420.1">
    <property type="nucleotide sequence ID" value="NM_001141948.2"/>
</dbReference>
<dbReference type="RefSeq" id="NP_001135421.1">
    <property type="nucleotide sequence ID" value="NM_001141949.2"/>
</dbReference>
<dbReference type="RefSeq" id="NP_001408816.1">
    <property type="nucleotide sequence ID" value="NM_001421887.1"/>
</dbReference>
<dbReference type="RefSeq" id="NP_062274.1">
    <property type="nucleotide sequence ID" value="NM_019401.3"/>
</dbReference>
<dbReference type="RefSeq" id="XP_006498281.1">
    <property type="nucleotide sequence ID" value="XM_006498218.3"/>
</dbReference>
<dbReference type="BioGRID" id="211098">
    <property type="interactions" value="2"/>
</dbReference>
<dbReference type="CORUM" id="O35309"/>
<dbReference type="FunCoup" id="O35309">
    <property type="interactions" value="1577"/>
</dbReference>
<dbReference type="IntAct" id="O35309">
    <property type="interactions" value="2"/>
</dbReference>
<dbReference type="STRING" id="10090.ENSMUSP00000028314"/>
<dbReference type="iPTMnet" id="O35309"/>
<dbReference type="PhosphoSitePlus" id="O35309"/>
<dbReference type="SwissPalm" id="O35309"/>
<dbReference type="REPRODUCTION-2DPAGE" id="O35309"/>
<dbReference type="PaxDb" id="10090-ENSMUSP00000120647"/>
<dbReference type="PeptideAtlas" id="O35309"/>
<dbReference type="ProteomicsDB" id="252913"/>
<dbReference type="Pumba" id="O35309"/>
<dbReference type="Antibodypedia" id="1783">
    <property type="antibodies" value="274 antibodies from 28 providers"/>
</dbReference>
<dbReference type="DNASU" id="64685"/>
<dbReference type="Ensembl" id="ENSMUST00000028314.9">
    <property type="protein sequence ID" value="ENSMUSP00000028314.3"/>
    <property type="gene ID" value="ENSMUSG00000026946.10"/>
</dbReference>
<dbReference type="Ensembl" id="ENSMUST00000112705.9">
    <property type="protein sequence ID" value="ENSMUSP00000108325.3"/>
    <property type="gene ID" value="ENSMUSG00000026946.10"/>
</dbReference>
<dbReference type="Ensembl" id="ENSMUST00000145481.8">
    <property type="protein sequence ID" value="ENSMUSP00000120647.2"/>
    <property type="gene ID" value="ENSMUSG00000026946.10"/>
</dbReference>
<dbReference type="GeneID" id="64685"/>
<dbReference type="KEGG" id="mmu:64685"/>
<dbReference type="UCSC" id="uc008jqm.2">
    <property type="organism name" value="mouse"/>
</dbReference>
<dbReference type="AGR" id="MGI:1928368"/>
<dbReference type="CTD" id="9111"/>
<dbReference type="MGI" id="MGI:1928368">
    <property type="gene designation" value="Nmi"/>
</dbReference>
<dbReference type="VEuPathDB" id="HostDB:ENSMUSG00000026946"/>
<dbReference type="eggNOG" id="ENOG502QVH1">
    <property type="taxonomic scope" value="Eukaryota"/>
</dbReference>
<dbReference type="GeneTree" id="ENSGT00530000063686"/>
<dbReference type="HOGENOM" id="CLU_047262_0_0_1"/>
<dbReference type="InParanoid" id="O35309"/>
<dbReference type="OMA" id="IYAQIPE"/>
<dbReference type="OrthoDB" id="9903237at2759"/>
<dbReference type="PhylomeDB" id="O35309"/>
<dbReference type="TreeFam" id="TF332752"/>
<dbReference type="BioGRID-ORCS" id="64685">
    <property type="hits" value="3 hits in 78 CRISPR screens"/>
</dbReference>
<dbReference type="ChiTaRS" id="Nmi">
    <property type="organism name" value="mouse"/>
</dbReference>
<dbReference type="PRO" id="PR:O35309"/>
<dbReference type="Proteomes" id="UP000000589">
    <property type="component" value="Chromosome 2"/>
</dbReference>
<dbReference type="RNAct" id="O35309">
    <property type="molecule type" value="protein"/>
</dbReference>
<dbReference type="Bgee" id="ENSMUSG00000026946">
    <property type="expression patterns" value="Expressed in small intestine Peyer's patch and 205 other cell types or tissues"/>
</dbReference>
<dbReference type="ExpressionAtlas" id="O35309">
    <property type="expression patterns" value="baseline and differential"/>
</dbReference>
<dbReference type="GO" id="GO:0005737">
    <property type="term" value="C:cytoplasm"/>
    <property type="evidence" value="ECO:0000250"/>
    <property type="project" value="UniProtKB"/>
</dbReference>
<dbReference type="GO" id="GO:0005829">
    <property type="term" value="C:cytosol"/>
    <property type="evidence" value="ECO:0000250"/>
    <property type="project" value="UniProtKB"/>
</dbReference>
<dbReference type="GO" id="GO:0005615">
    <property type="term" value="C:extracellular space"/>
    <property type="evidence" value="ECO:0000314"/>
    <property type="project" value="UniProtKB"/>
</dbReference>
<dbReference type="GO" id="GO:0016020">
    <property type="term" value="C:membrane"/>
    <property type="evidence" value="ECO:0000250"/>
    <property type="project" value="UniProtKB"/>
</dbReference>
<dbReference type="GO" id="GO:0005654">
    <property type="term" value="C:nucleoplasm"/>
    <property type="evidence" value="ECO:0007669"/>
    <property type="project" value="Ensembl"/>
</dbReference>
<dbReference type="GO" id="GO:0005634">
    <property type="term" value="C:nucleus"/>
    <property type="evidence" value="ECO:0000250"/>
    <property type="project" value="UniProtKB"/>
</dbReference>
<dbReference type="GO" id="GO:0042802">
    <property type="term" value="F:identical protein binding"/>
    <property type="evidence" value="ECO:0007669"/>
    <property type="project" value="Ensembl"/>
</dbReference>
<dbReference type="GO" id="GO:0045087">
    <property type="term" value="P:innate immune response"/>
    <property type="evidence" value="ECO:0007669"/>
    <property type="project" value="UniProtKB-KW"/>
</dbReference>
<dbReference type="GO" id="GO:0002281">
    <property type="term" value="P:macrophage activation involved in immune response"/>
    <property type="evidence" value="ECO:0000250"/>
    <property type="project" value="UniProtKB"/>
</dbReference>
<dbReference type="GO" id="GO:0008285">
    <property type="term" value="P:negative regulation of cell population proliferation"/>
    <property type="evidence" value="ECO:0000250"/>
    <property type="project" value="UniProtKB"/>
</dbReference>
<dbReference type="GO" id="GO:0045824">
    <property type="term" value="P:negative regulation of innate immune response"/>
    <property type="evidence" value="ECO:0000314"/>
    <property type="project" value="MGI"/>
</dbReference>
<dbReference type="GO" id="GO:0032687">
    <property type="term" value="P:negative regulation of interferon-alpha production"/>
    <property type="evidence" value="ECO:0000315"/>
    <property type="project" value="MGI"/>
</dbReference>
<dbReference type="GO" id="GO:0032688">
    <property type="term" value="P:negative regulation of interferon-beta production"/>
    <property type="evidence" value="ECO:0000315"/>
    <property type="project" value="MGI"/>
</dbReference>
<dbReference type="GO" id="GO:1901223">
    <property type="term" value="P:negative regulation of non-canonical NF-kappaB signal transduction"/>
    <property type="evidence" value="ECO:0000250"/>
    <property type="project" value="UniProtKB"/>
</dbReference>
<dbReference type="GO" id="GO:0032480">
    <property type="term" value="P:negative regulation of type I interferon production"/>
    <property type="evidence" value="ECO:0000316"/>
    <property type="project" value="MGI"/>
</dbReference>
<dbReference type="GO" id="GO:0050729">
    <property type="term" value="P:positive regulation of inflammatory response"/>
    <property type="evidence" value="ECO:0000315"/>
    <property type="project" value="UniProtKB"/>
</dbReference>
<dbReference type="GO" id="GO:0045089">
    <property type="term" value="P:positive regulation of innate immune response"/>
    <property type="evidence" value="ECO:0000315"/>
    <property type="project" value="UniProtKB"/>
</dbReference>
<dbReference type="GO" id="GO:1901224">
    <property type="term" value="P:positive regulation of non-canonical NF-kappaB signal transduction"/>
    <property type="evidence" value="ECO:0000250"/>
    <property type="project" value="UniProtKB"/>
</dbReference>
<dbReference type="GO" id="GO:1902524">
    <property type="term" value="P:positive regulation of protein K48-linked ubiquitination"/>
    <property type="evidence" value="ECO:0000314"/>
    <property type="project" value="MGI"/>
</dbReference>
<dbReference type="GO" id="GO:0070936">
    <property type="term" value="P:protein K48-linked ubiquitination"/>
    <property type="evidence" value="ECO:0000314"/>
    <property type="project" value="MGI"/>
</dbReference>
<dbReference type="GO" id="GO:0009615">
    <property type="term" value="P:response to virus"/>
    <property type="evidence" value="ECO:0000315"/>
    <property type="project" value="UniProtKB"/>
</dbReference>
<dbReference type="GO" id="GO:0034142">
    <property type="term" value="P:toll-like receptor 4 signaling pathway"/>
    <property type="evidence" value="ECO:0000314"/>
    <property type="project" value="UniProtKB"/>
</dbReference>
<dbReference type="CDD" id="cd12544">
    <property type="entry name" value="RRM_NMI"/>
    <property type="match status" value="1"/>
</dbReference>
<dbReference type="FunFam" id="3.30.70.330:FF:000300">
    <property type="entry name" value="Interferon-induced protein 35"/>
    <property type="match status" value="1"/>
</dbReference>
<dbReference type="Gene3D" id="3.30.70.330">
    <property type="match status" value="2"/>
</dbReference>
<dbReference type="InterPro" id="IPR009909">
    <property type="entry name" value="Nmi/IFP35_dom"/>
</dbReference>
<dbReference type="InterPro" id="IPR009938">
    <property type="entry name" value="Nmi/IFP35_N"/>
</dbReference>
<dbReference type="InterPro" id="IPR012677">
    <property type="entry name" value="Nucleotide-bd_a/b_plait_sf"/>
</dbReference>
<dbReference type="PANTHER" id="PTHR15225">
    <property type="entry name" value="INTERFERON-INDUCED PROTEIN 35/NMI N-MYC/STAT INTERACTING PROTEIN"/>
    <property type="match status" value="1"/>
</dbReference>
<dbReference type="PANTHER" id="PTHR15225:SF4">
    <property type="entry name" value="N-MYC-INTERACTOR"/>
    <property type="match status" value="1"/>
</dbReference>
<dbReference type="Pfam" id="PF07334">
    <property type="entry name" value="IFP_35_N"/>
    <property type="match status" value="1"/>
</dbReference>
<dbReference type="Pfam" id="PF07292">
    <property type="entry name" value="NID"/>
    <property type="match status" value="2"/>
</dbReference>
<proteinExistence type="evidence at protein level"/>
<sequence length="314" mass="35236">MDADKDNIKQACDERSAEMDDMRGEQSMGLVHEIMSENKELDEEIKKLEAELQSDAREFQIKENVPEKKLKLTSVESPKDGCHFSNSSCSFQVSSQILYELQEGQALITFEKEEVAQNVISMGNHVVQMEGTPVKVSAHPVPLNTGVRFQVHVDISKMKINVTGIPDELSEEQTRDKLELSFCKSRNGGGEVESVDYDRKSRSAVITFVETGVVDKILKKKTYPLYMNQKCHSVAVSPCIERCLEKYQVFSAVSKKTVLLTGLEGIPVDEETGEDLLNIHFQRKNNGGGEVEVVKCSLDQSFAAYFKEEARETI</sequence>
<evidence type="ECO:0000250" key="1">
    <source>
        <dbReference type="UniProtKB" id="Q13287"/>
    </source>
</evidence>
<evidence type="ECO:0000255" key="2"/>
<evidence type="ECO:0000256" key="3">
    <source>
        <dbReference type="SAM" id="MobiDB-lite"/>
    </source>
</evidence>
<evidence type="ECO:0000269" key="4">
    <source>
    </source>
</evidence>
<evidence type="ECO:0000269" key="5">
    <source>
    </source>
</evidence>
<evidence type="ECO:0000303" key="6">
    <source>
    </source>
</evidence>
<evidence type="ECO:0000305" key="7"/>
<evidence type="ECO:0000312" key="8">
    <source>
        <dbReference type="MGI" id="MGI:1928368"/>
    </source>
</evidence>
<feature type="chain" id="PRO_0000159703" description="N-myc-interactor">
    <location>
        <begin position="1"/>
        <end position="314"/>
    </location>
</feature>
<feature type="domain" description="NID 1" evidence="6">
    <location>
        <begin position="104"/>
        <end position="193"/>
    </location>
</feature>
<feature type="domain" description="NID 2" evidence="1">
    <location>
        <begin position="202"/>
        <end position="293"/>
    </location>
</feature>
<feature type="region of interest" description="Disordered" evidence="3">
    <location>
        <begin position="1"/>
        <end position="24"/>
    </location>
</feature>
<feature type="coiled-coil region" evidence="2">
    <location>
        <begin position="31"/>
        <end position="65"/>
    </location>
</feature>
<feature type="modified residue" description="Phosphoserine" evidence="1">
    <location>
        <position position="16"/>
    </location>
</feature>
<feature type="sequence conflict" description="In Ref. 2; AAH02019." evidence="7" ref="2">
    <original>K</original>
    <variation>E</variation>
    <location>
        <position position="79"/>
    </location>
</feature>
<feature type="sequence conflict" description="In Ref. 2; AAH02019." evidence="7" ref="2">
    <original>E</original>
    <variation>K</variation>
    <location>
        <position position="103"/>
    </location>
</feature>
<feature type="sequence conflict" description="In Ref. 2; AAH02019." evidence="7" ref="2">
    <original>C</original>
    <variation>R</variation>
    <location>
        <position position="243"/>
    </location>
</feature>
<feature type="sequence conflict" description="In Ref. 2; AAH02019." evidence="7" ref="2">
    <original>P</original>
    <variation>R</variation>
    <location>
        <position position="267"/>
    </location>
</feature>
<gene>
    <name evidence="8" type="primary">Nmi</name>
</gene>
<reference key="1">
    <citation type="submission" date="1997-08" db="EMBL/GenBank/DDBJ databases">
        <authorList>
            <person name="Mehtani S."/>
            <person name="Zervos A.S."/>
        </authorList>
    </citation>
    <scope>NUCLEOTIDE SEQUENCE [MRNA]</scope>
</reference>
<reference key="2">
    <citation type="journal article" date="2004" name="Genome Res.">
        <title>The status, quality, and expansion of the NIH full-length cDNA project: the Mammalian Gene Collection (MGC).</title>
        <authorList>
            <consortium name="The MGC Project Team"/>
        </authorList>
    </citation>
    <scope>NUCLEOTIDE SEQUENCE [LARGE SCALE MRNA]</scope>
</reference>
<reference key="3">
    <citation type="journal article" date="2010" name="Cell">
        <title>A tissue-specific atlas of mouse protein phosphorylation and expression.</title>
        <authorList>
            <person name="Huttlin E.L."/>
            <person name="Jedrychowski M.P."/>
            <person name="Elias J.E."/>
            <person name="Goswami T."/>
            <person name="Rad R."/>
            <person name="Beausoleil S.A."/>
            <person name="Villen J."/>
            <person name="Haas W."/>
            <person name="Sowa M.E."/>
            <person name="Gygi S.P."/>
        </authorList>
    </citation>
    <scope>IDENTIFICATION BY MASS SPECTROMETRY [LARGE SCALE ANALYSIS]</scope>
    <source>
        <tissue>Brown adipose tissue</tissue>
        <tissue>Heart</tissue>
        <tissue>Kidney</tissue>
        <tissue>Liver</tissue>
        <tissue>Lung</tissue>
        <tissue>Spleen</tissue>
        <tissue>Testis</tissue>
    </source>
</reference>
<reference key="4">
    <citation type="journal article" date="2013" name="J. Immunol.">
        <title>Negative regulation of Nmi on virus-triggered type I IFN production by targeting IRF7.</title>
        <authorList>
            <person name="Wang J."/>
            <person name="Yang B."/>
            <person name="Hu Y."/>
            <person name="Zheng Y."/>
            <person name="Zhou H."/>
            <person name="Wang Y."/>
            <person name="Ma Y."/>
            <person name="Mao K."/>
            <person name="Yang L."/>
            <person name="Lin G."/>
            <person name="Ji Y."/>
            <person name="Wu X."/>
            <person name="Sun B."/>
        </authorList>
    </citation>
    <scope>FUNCTION</scope>
    <scope>INTERACTION WITH IRF7</scope>
    <scope>INDUCTION BY SENDAI VIRUS</scope>
    <scope>REGION</scope>
    <scope>MUTAGENESIS OF 1-MET--ILE-97 AND 201-SER--ILE-314</scope>
</reference>
<reference key="5">
    <citation type="journal article" date="2017" name="Nat. Commun.">
        <title>NMI and IFP35 serve as proinflammatory DAMPs during cellular infection and injury.</title>
        <authorList>
            <person name="Xiahou Z."/>
            <person name="Wang X."/>
            <person name="Shen J."/>
            <person name="Zhu X."/>
            <person name="Xu F."/>
            <person name="Hu R."/>
            <person name="Guo D."/>
            <person name="Li H."/>
            <person name="Tian Y."/>
            <person name="Liu Y."/>
            <person name="Liang H."/>
        </authorList>
    </citation>
    <scope>TISSUE SPECIFICITY</scope>
    <scope>DISRUPTION PHENOTYPE</scope>
</reference>
<keyword id="KW-0175">Coiled coil</keyword>
<keyword id="KW-0963">Cytoplasm</keyword>
<keyword id="KW-0391">Immunity</keyword>
<keyword id="KW-0399">Innate immunity</keyword>
<keyword id="KW-1017">Isopeptide bond</keyword>
<keyword id="KW-0539">Nucleus</keyword>
<keyword id="KW-0597">Phosphoprotein</keyword>
<keyword id="KW-1185">Reference proteome</keyword>
<keyword id="KW-0964">Secreted</keyword>
<keyword id="KW-0832">Ubl conjugation</keyword>
<comment type="function">
    <text evidence="1 4">Acts as a signaling pathway regulator involved in innate immune system response (PubMed:23956435). In response to interleukin 2/IL2 and interferon IFN-gamma/IFNG, interacts with signal transducer and activator of transcription/STAT which activate the transcription of downstream genes involved in a multitude of signals for development and homeostasis (By similarity). Enhances the recruitment of CBP/p300 coactivators to STAT1 and STAT5, resulting in increased STAT1- and STAT5-dependent transcription (By similarity). In response to interferon IFN-alpha, associates in a complex with transcriptional regulator IFI35 to regulate immune response; the complex formation prevents proteasome-mediated degradation of IFI35 (By similarity). In complex with IFI35, negatively regulates nuclear factor NF-kappa-B signaling by inhibiting the nuclear translocation, activation and transcription of NF-kappa-B subunit p65/RELA, resulting in the inhibition of endothelial cell proliferation, migration and re-endothelialization of injured arteries (By similarity). Negatively regulates virus-triggered type I interferon/IFN production by inducing proteosome-dependent degradation of IRF7, a transcriptional regulator of type I IFN, thereby interfering with cellular antiviral responses (PubMed:23956435). Beside its role as an intracellular signaling pathway regulator, also functions extracellularly as damage-associated molecular patterns (DAMPs) to promote inflammation, when actively released by macrophage to the extracellular space during cell injury or pathogen invasion (By similarity). Macrophage-secreted NMI activates NF-kappa-B signaling in adjacent macrophages through Toll-like receptor 4/TLR4 binding and activation, thereby inducing NF-kappa-B translocation from the cytoplasm into the nucleus which promotes the release of pro-inflammatory cytokines (By similarity).</text>
</comment>
<comment type="subunit">
    <text evidence="1 4">Interacts with MYCN and MYC, as well as with other transcription factors with a Zip, HLH or a HLH-Zip motif. Interacts with all STAT proteins except STAT2 (By similarity). Interacts with IRF7, the interaction is direct and leads to the inhibition of IRF7-mediated type I IFN production (PubMed:23956435). Interacts (via coiled-coil domain) with TRIM21 (via the SPRY domain); the interaction leads to 'Lys-63'-linked ubiquitination of NMI. Interacts with IFI35; the interaction is direct and is facilitated by TRIM21. Interacts with TLR4; the interaction is direct and leads to NF-kappa-B activation (By similarity).</text>
</comment>
<comment type="subcellular location">
    <subcellularLocation>
        <location evidence="1">Cytoplasm</location>
    </subcellularLocation>
    <subcellularLocation>
        <location evidence="1">Nucleus</location>
    </subcellularLocation>
    <subcellularLocation>
        <location evidence="1">Secreted</location>
    </subcellularLocation>
    <text evidence="1">Cytoplasmic NMI localizes in punctate granular structures. Nuclear localization increased following IFN-alpha treatment. Extracelullar following secretion by macrophage.</text>
</comment>
<comment type="tissue specificity">
    <text evidence="5">Expressed in macrophages.</text>
</comment>
<comment type="induction">
    <text evidence="4">Induced by Sendai virus.</text>
</comment>
<comment type="domain">
    <text evidence="1">The coiled-coil domain may be necessary for interaction with TRIM21 and for TRIM21-mediated ubiquitination of NMI.</text>
</comment>
<comment type="domain">
    <text evidence="1 4">The NID domains are necessary for the interaction with IFI35 (By similarity). The NID domain 1 is necessary and IRF7 (PubMed:23956435).</text>
</comment>
<comment type="PTM">
    <text evidence="1">May be ubiquitinated.</text>
</comment>
<comment type="disruption phenotype">
    <text evidence="5">Knockout mice show decreased inflammatory response when exposed to infection of injury, which can lead to lower inflammation-induced mortality. Display normal development of the immune system.</text>
</comment>
<comment type="similarity">
    <text evidence="7">Belongs to the NMI family.</text>
</comment>
<comment type="caution">
    <text evidence="1">The TRIM21-mediated ubiquitinated residue is not conserved in mice, therefore it remains unclear whether the physiological role of NMI ubiquitination is preserved throughout mammals.</text>
</comment>